<reference key="1">
    <citation type="journal article" date="1996" name="Biochim. Biophys. Acta">
        <title>A cDNA clone from Arabidopsis thaliana encoding plastidic ferredoxin:sulfite reductase.</title>
        <authorList>
            <person name="Bruehl A."/>
            <person name="Haverkamp T."/>
            <person name="Gisselmann G."/>
            <person name="Schwenn J.D."/>
        </authorList>
    </citation>
    <scope>NUCLEOTIDE SEQUENCE [GENOMIC DNA]</scope>
    <source>
        <strain>DSM 219 / 6311</strain>
    </source>
</reference>
<evidence type="ECO:0000250" key="1"/>
<evidence type="ECO:0000255" key="2">
    <source>
        <dbReference type="PROSITE-ProRule" id="PRU00253"/>
    </source>
</evidence>
<evidence type="ECO:0000305" key="3"/>
<comment type="function">
    <text evidence="1">This protein is a positive regulator of gene expression for the cysteine regulon.</text>
</comment>
<comment type="similarity">
    <text evidence="3">Belongs to the LysR transcriptional regulatory family.</text>
</comment>
<sequence>MDVRQLRSLVTLVEVRFSVSRAAECLHLVQSAVTQHLKQLEAELGTRLFVRHGKRLVGLTEVGEQVLRHACEALRQTGNIVAVGREHLEEERRRIRLGATHTQARYVLPPVIRRFAAAYPAVELQIHQGTPGQLVD</sequence>
<name>CYSB_THIRO</name>
<feature type="chain" id="PRO_0000105619" description="HTH-type transcriptional regulator CysB">
    <location>
        <begin position="1"/>
        <end position="136" status="greater than"/>
    </location>
</feature>
<feature type="domain" description="HTH lysR-type" evidence="2">
    <location>
        <begin position="1"/>
        <end position="59"/>
    </location>
</feature>
<feature type="DNA-binding region" description="H-T-H motif" evidence="2">
    <location>
        <begin position="19"/>
        <end position="38"/>
    </location>
</feature>
<feature type="non-terminal residue">
    <location>
        <position position="136"/>
    </location>
</feature>
<keyword id="KW-0010">Activator</keyword>
<keyword id="KW-0238">DNA-binding</keyword>
<keyword id="KW-0804">Transcription</keyword>
<keyword id="KW-0805">Transcription regulation</keyword>
<dbReference type="EMBL" id="Z23169">
    <property type="protein sequence ID" value="CAA80689.1"/>
    <property type="molecule type" value="Genomic_DNA"/>
</dbReference>
<dbReference type="PIR" id="S34192">
    <property type="entry name" value="S34192"/>
</dbReference>
<dbReference type="SMR" id="P52675"/>
<dbReference type="STRING" id="1058.SAMN05421783_107101"/>
<dbReference type="GO" id="GO:0003700">
    <property type="term" value="F:DNA-binding transcription factor activity"/>
    <property type="evidence" value="ECO:0007669"/>
    <property type="project" value="InterPro"/>
</dbReference>
<dbReference type="GO" id="GO:0000976">
    <property type="term" value="F:transcription cis-regulatory region binding"/>
    <property type="evidence" value="ECO:0007669"/>
    <property type="project" value="TreeGrafter"/>
</dbReference>
<dbReference type="GO" id="GO:0019344">
    <property type="term" value="P:cysteine biosynthetic process"/>
    <property type="evidence" value="ECO:0007669"/>
    <property type="project" value="TreeGrafter"/>
</dbReference>
<dbReference type="Gene3D" id="3.40.190.10">
    <property type="entry name" value="Periplasmic binding protein-like II"/>
    <property type="match status" value="1"/>
</dbReference>
<dbReference type="Gene3D" id="1.10.10.10">
    <property type="entry name" value="Winged helix-like DNA-binding domain superfamily/Winged helix DNA-binding domain"/>
    <property type="match status" value="1"/>
</dbReference>
<dbReference type="InterPro" id="IPR005119">
    <property type="entry name" value="LysR_subst-bd"/>
</dbReference>
<dbReference type="InterPro" id="IPR000847">
    <property type="entry name" value="Tscrpt_reg_HTH_LysR"/>
</dbReference>
<dbReference type="InterPro" id="IPR036388">
    <property type="entry name" value="WH-like_DNA-bd_sf"/>
</dbReference>
<dbReference type="InterPro" id="IPR036390">
    <property type="entry name" value="WH_DNA-bd_sf"/>
</dbReference>
<dbReference type="PANTHER" id="PTHR30126">
    <property type="entry name" value="HTH-TYPE TRANSCRIPTIONAL REGULATOR"/>
    <property type="match status" value="1"/>
</dbReference>
<dbReference type="PANTHER" id="PTHR30126:SF6">
    <property type="entry name" value="HTH-TYPE TRANSCRIPTIONAL REGULATOR CYSB-RELATED"/>
    <property type="match status" value="1"/>
</dbReference>
<dbReference type="Pfam" id="PF00126">
    <property type="entry name" value="HTH_1"/>
    <property type="match status" value="1"/>
</dbReference>
<dbReference type="Pfam" id="PF03466">
    <property type="entry name" value="LysR_substrate"/>
    <property type="match status" value="1"/>
</dbReference>
<dbReference type="PRINTS" id="PR00039">
    <property type="entry name" value="HTHLYSR"/>
</dbReference>
<dbReference type="SUPFAM" id="SSF46785">
    <property type="entry name" value="Winged helix' DNA-binding domain"/>
    <property type="match status" value="1"/>
</dbReference>
<dbReference type="PROSITE" id="PS50931">
    <property type="entry name" value="HTH_LYSR"/>
    <property type="match status" value="1"/>
</dbReference>
<protein>
    <recommendedName>
        <fullName>HTH-type transcriptional regulator CysB</fullName>
    </recommendedName>
    <alternativeName>
        <fullName>Cys regulon transcriptional activator</fullName>
    </alternativeName>
</protein>
<accession>P52675</accession>
<gene>
    <name type="primary">cysB</name>
</gene>
<organism>
    <name type="scientific">Thiocapsa roseopersicina</name>
    <dbReference type="NCBI Taxonomy" id="1058"/>
    <lineage>
        <taxon>Bacteria</taxon>
        <taxon>Pseudomonadati</taxon>
        <taxon>Pseudomonadota</taxon>
        <taxon>Gammaproteobacteria</taxon>
        <taxon>Chromatiales</taxon>
        <taxon>Chromatiaceae</taxon>
        <taxon>Thiocapsa</taxon>
    </lineage>
</organism>
<proteinExistence type="inferred from homology"/>